<name>CQ078_BOVIN</name>
<protein>
    <recommendedName>
        <fullName>Uncharacterized protein C17orf78 homolog</fullName>
    </recommendedName>
</protein>
<reference key="1">
    <citation type="submission" date="2007-06" db="EMBL/GenBank/DDBJ databases">
        <authorList>
            <consortium name="NIH - Mammalian Gene Collection (MGC) project"/>
        </authorList>
    </citation>
    <scope>NUCLEOTIDE SEQUENCE [LARGE SCALE MRNA]</scope>
    <source>
        <strain>Hereford</strain>
        <tissue>Ascending colon</tissue>
    </source>
</reference>
<sequence>MDTILVFSLIITSYNVTKKELRDSSCQVEPLPDLFPKDVRSIRAELIREAQAEAKRPMFIQNQTVAILQCLGSGSKVKVNLVHSEKRQKVKHILKNLRVMTVPCRNSTAPPSCHLTPASKVQAGFLVTGKAFLPGVSQCKVYPVMGASSETYPSTTTSVTPGKKGEKTTKVDGFSSPLNQDTDENLEKRKKWSIVVKVLIAVTLFVSGIAITVFVIFEVPCPSRCQQVRELCQCQRLRRRPRKEDQQPGTAESQSDTQPKKVGQEAPNSSSPKKAVEITVVHQTYF</sequence>
<dbReference type="EMBL" id="BC146231">
    <property type="protein sequence ID" value="AAI46232.1"/>
    <property type="molecule type" value="mRNA"/>
</dbReference>
<dbReference type="RefSeq" id="NP_001092628.1">
    <property type="nucleotide sequence ID" value="NM_001099158.1"/>
</dbReference>
<dbReference type="FunCoup" id="A6H7F9">
    <property type="interactions" value="3"/>
</dbReference>
<dbReference type="STRING" id="9913.ENSBTAP00000035278"/>
<dbReference type="PaxDb" id="9913-ENSBTAP00000035278"/>
<dbReference type="GeneID" id="616575"/>
<dbReference type="KEGG" id="bta:616575"/>
<dbReference type="CTD" id="616575"/>
<dbReference type="VEuPathDB" id="HostDB:ENSBTAG00000025242"/>
<dbReference type="eggNOG" id="ENOG502SUFK">
    <property type="taxonomic scope" value="Eukaryota"/>
</dbReference>
<dbReference type="HOGENOM" id="CLU_083643_0_0_1"/>
<dbReference type="InParanoid" id="A6H7F9"/>
<dbReference type="OMA" id="FIIFEVP"/>
<dbReference type="OrthoDB" id="9118309at2759"/>
<dbReference type="TreeFam" id="TF337703"/>
<dbReference type="Proteomes" id="UP000009136">
    <property type="component" value="Chromosome 19"/>
</dbReference>
<dbReference type="Bgee" id="ENSBTAG00000025242">
    <property type="expression patterns" value="Expressed in oocyte and 8 other cell types or tissues"/>
</dbReference>
<dbReference type="GO" id="GO:0016020">
    <property type="term" value="C:membrane"/>
    <property type="evidence" value="ECO:0007669"/>
    <property type="project" value="UniProtKB-SubCell"/>
</dbReference>
<dbReference type="InterPro" id="IPR031668">
    <property type="entry name" value="DUF4711"/>
</dbReference>
<dbReference type="PANTHER" id="PTHR36870">
    <property type="entry name" value="C17ORF78 ISOFORM 2"/>
    <property type="match status" value="1"/>
</dbReference>
<dbReference type="PANTHER" id="PTHR36870:SF1">
    <property type="entry name" value="CHROMOSOME 17 C17ORF78 HOMOLOG"/>
    <property type="match status" value="1"/>
</dbReference>
<dbReference type="Pfam" id="PF15829">
    <property type="entry name" value="DUF4711"/>
    <property type="match status" value="1"/>
</dbReference>
<evidence type="ECO:0000255" key="1"/>
<evidence type="ECO:0000256" key="2">
    <source>
        <dbReference type="SAM" id="MobiDB-lite"/>
    </source>
</evidence>
<evidence type="ECO:0000305" key="3"/>
<organism>
    <name type="scientific">Bos taurus</name>
    <name type="common">Bovine</name>
    <dbReference type="NCBI Taxonomy" id="9913"/>
    <lineage>
        <taxon>Eukaryota</taxon>
        <taxon>Metazoa</taxon>
        <taxon>Chordata</taxon>
        <taxon>Craniata</taxon>
        <taxon>Vertebrata</taxon>
        <taxon>Euteleostomi</taxon>
        <taxon>Mammalia</taxon>
        <taxon>Eutheria</taxon>
        <taxon>Laurasiatheria</taxon>
        <taxon>Artiodactyla</taxon>
        <taxon>Ruminantia</taxon>
        <taxon>Pecora</taxon>
        <taxon>Bovidae</taxon>
        <taxon>Bovinae</taxon>
        <taxon>Bos</taxon>
    </lineage>
</organism>
<accession>A6H7F9</accession>
<comment type="subcellular location">
    <subcellularLocation>
        <location evidence="3">Membrane</location>
        <topology evidence="3">Single-pass membrane protein</topology>
    </subcellularLocation>
</comment>
<feature type="chain" id="PRO_0000300629" description="Uncharacterized protein C17orf78 homolog">
    <location>
        <begin position="1"/>
        <end position="286"/>
    </location>
</feature>
<feature type="transmembrane region" description="Helical" evidence="1">
    <location>
        <begin position="198"/>
        <end position="218"/>
    </location>
</feature>
<feature type="region of interest" description="Disordered" evidence="2">
    <location>
        <begin position="152"/>
        <end position="182"/>
    </location>
</feature>
<feature type="region of interest" description="Disordered" evidence="2">
    <location>
        <begin position="239"/>
        <end position="278"/>
    </location>
</feature>
<feature type="compositionally biased region" description="Polar residues" evidence="2">
    <location>
        <begin position="247"/>
        <end position="257"/>
    </location>
</feature>
<keyword id="KW-0472">Membrane</keyword>
<keyword id="KW-1185">Reference proteome</keyword>
<keyword id="KW-0812">Transmembrane</keyword>
<keyword id="KW-1133">Transmembrane helix</keyword>
<proteinExistence type="evidence at transcript level"/>